<accession>Q5A519</accession>
<accession>A0A1D8PMZ7</accession>
<proteinExistence type="inferred from homology"/>
<sequence length="203" mass="23374">MTSEVIKFPQFPEFTIHISLFINVSSENITTIKSNLISATDNDHNKYDYCFLNTKYIISKEHLFQSIYKSLLNYTSKLGLSTRNLKSEIIYNLSPINNVGDALKRFGISEDCPNCIVIKIINNNNKENSEETKISEKVTTDLKEIIDGELIELNDQYIFENFIDLAKFRKLYKLNDVVDLNKEDNLQGRLTRLAIGACILRGY</sequence>
<name>CG121_CANAL</name>
<keyword id="KW-0010">Activator</keyword>
<keyword id="KW-0158">Chromosome</keyword>
<keyword id="KW-0539">Nucleus</keyword>
<keyword id="KW-1185">Reference proteome</keyword>
<keyword id="KW-0779">Telomere</keyword>
<keyword id="KW-0804">Transcription</keyword>
<keyword id="KW-0805">Transcription regulation</keyword>
<keyword id="KW-0819">tRNA processing</keyword>
<comment type="function">
    <text evidence="1">Component of the EKC/KEOPS complex that is required for the formation of a threonylcarbamoyl group on adenosine at position 37 (t(6)A37) in tRNAs that read codons beginning with adenine. The complex is probably involved in the transfer of the threonylcarbamoyl moiety of threonylcarbamoyl-AMP (TC-AMP) to the N6 group of A37. CGI121 acts as an allosteric effector that regulates the t(6)A activity of the complex. The EKC/KEOPS complex also promotes both telomere uncapping and telomere elongation. The complex is required for efficient recruitment of transcriptional coactivators. CGI121 is not required for tRNA modification (By similarity).</text>
</comment>
<comment type="subunit">
    <text evidence="1">Component of the EKC/KEOPS complex composed of at least BUD32, CGI121, GON7, KAE1 and PCC1; the whole complex dimerizes.</text>
</comment>
<comment type="subcellular location">
    <subcellularLocation>
        <location evidence="1">Nucleus</location>
    </subcellularLocation>
    <subcellularLocation>
        <location evidence="1">Chromosome</location>
        <location evidence="1">Telomere</location>
    </subcellularLocation>
</comment>
<comment type="similarity">
    <text evidence="2">Belongs to the CGI121/TPRKB family.</text>
</comment>
<gene>
    <name type="primary">CGI121</name>
    <name type="ordered locus">CAALFM_C500620WA</name>
    <name type="ORF">CaO19.8542</name>
    <name type="ORF">CaO19.927</name>
</gene>
<dbReference type="EMBL" id="CP017627">
    <property type="protein sequence ID" value="AOW29505.1"/>
    <property type="molecule type" value="Genomic_DNA"/>
</dbReference>
<dbReference type="RefSeq" id="XP_716766.1">
    <property type="nucleotide sequence ID" value="XM_711673.1"/>
</dbReference>
<dbReference type="SMR" id="Q5A519"/>
<dbReference type="FunCoup" id="Q5A519">
    <property type="interactions" value="515"/>
</dbReference>
<dbReference type="STRING" id="237561.Q5A519"/>
<dbReference type="EnsemblFungi" id="C5_00620W_A-T">
    <property type="protein sequence ID" value="C5_00620W_A-T-p1"/>
    <property type="gene ID" value="C5_00620W_A"/>
</dbReference>
<dbReference type="GeneID" id="3641584"/>
<dbReference type="KEGG" id="cal:CAALFM_C500620WA"/>
<dbReference type="CGD" id="CAL0000182468">
    <property type="gene designation" value="orf19.8542"/>
</dbReference>
<dbReference type="VEuPathDB" id="FungiDB:C5_00620W_A"/>
<dbReference type="eggNOG" id="KOG4066">
    <property type="taxonomic scope" value="Eukaryota"/>
</dbReference>
<dbReference type="HOGENOM" id="CLU_065847_1_1_1"/>
<dbReference type="InParanoid" id="Q5A519"/>
<dbReference type="OMA" id="IVCRMST"/>
<dbReference type="OrthoDB" id="329139at2759"/>
<dbReference type="PRO" id="PR:Q5A519"/>
<dbReference type="Proteomes" id="UP000000559">
    <property type="component" value="Chromosome 5"/>
</dbReference>
<dbReference type="GO" id="GO:0000781">
    <property type="term" value="C:chromosome, telomeric region"/>
    <property type="evidence" value="ECO:0007669"/>
    <property type="project" value="UniProtKB-SubCell"/>
</dbReference>
<dbReference type="GO" id="GO:0005829">
    <property type="term" value="C:cytosol"/>
    <property type="evidence" value="ECO:0000318"/>
    <property type="project" value="GO_Central"/>
</dbReference>
<dbReference type="GO" id="GO:0000408">
    <property type="term" value="C:EKC/KEOPS complex"/>
    <property type="evidence" value="ECO:0000318"/>
    <property type="project" value="GO_Central"/>
</dbReference>
<dbReference type="GO" id="GO:0005634">
    <property type="term" value="C:nucleus"/>
    <property type="evidence" value="ECO:0000318"/>
    <property type="project" value="GO_Central"/>
</dbReference>
<dbReference type="GO" id="GO:0002949">
    <property type="term" value="P:tRNA threonylcarbamoyladenosine modification"/>
    <property type="evidence" value="ECO:0000318"/>
    <property type="project" value="GO_Central"/>
</dbReference>
<dbReference type="Gene3D" id="3.30.2380.10">
    <property type="entry name" value="CGI121/TPRKB"/>
    <property type="match status" value="1"/>
</dbReference>
<dbReference type="InterPro" id="IPR013926">
    <property type="entry name" value="CGI121/TPRKB"/>
</dbReference>
<dbReference type="InterPro" id="IPR036504">
    <property type="entry name" value="CGI121/TPRKB_sf"/>
</dbReference>
<dbReference type="PANTHER" id="PTHR15840">
    <property type="entry name" value="CGI-121 FAMILY MEMBER"/>
    <property type="match status" value="1"/>
</dbReference>
<dbReference type="PANTHER" id="PTHR15840:SF10">
    <property type="entry name" value="EKC_KEOPS COMPLEX SUBUNIT TPRKB"/>
    <property type="match status" value="1"/>
</dbReference>
<dbReference type="Pfam" id="PF08617">
    <property type="entry name" value="CGI-121"/>
    <property type="match status" value="1"/>
</dbReference>
<dbReference type="SUPFAM" id="SSF143870">
    <property type="entry name" value="PF0523-like"/>
    <property type="match status" value="1"/>
</dbReference>
<organism>
    <name type="scientific">Candida albicans (strain SC5314 / ATCC MYA-2876)</name>
    <name type="common">Yeast</name>
    <dbReference type="NCBI Taxonomy" id="237561"/>
    <lineage>
        <taxon>Eukaryota</taxon>
        <taxon>Fungi</taxon>
        <taxon>Dikarya</taxon>
        <taxon>Ascomycota</taxon>
        <taxon>Saccharomycotina</taxon>
        <taxon>Pichiomycetes</taxon>
        <taxon>Debaryomycetaceae</taxon>
        <taxon>Candida/Lodderomyces clade</taxon>
        <taxon>Candida</taxon>
    </lineage>
</organism>
<reference key="1">
    <citation type="journal article" date="2004" name="Proc. Natl. Acad. Sci. U.S.A.">
        <title>The diploid genome sequence of Candida albicans.</title>
        <authorList>
            <person name="Jones T."/>
            <person name="Federspiel N.A."/>
            <person name="Chibana H."/>
            <person name="Dungan J."/>
            <person name="Kalman S."/>
            <person name="Magee B.B."/>
            <person name="Newport G."/>
            <person name="Thorstenson Y.R."/>
            <person name="Agabian N."/>
            <person name="Magee P.T."/>
            <person name="Davis R.W."/>
            <person name="Scherer S."/>
        </authorList>
    </citation>
    <scope>NUCLEOTIDE SEQUENCE [LARGE SCALE GENOMIC DNA]</scope>
    <source>
        <strain>SC5314 / ATCC MYA-2876</strain>
    </source>
</reference>
<reference key="2">
    <citation type="journal article" date="2007" name="Genome Biol.">
        <title>Assembly of the Candida albicans genome into sixteen supercontigs aligned on the eight chromosomes.</title>
        <authorList>
            <person name="van het Hoog M."/>
            <person name="Rast T.J."/>
            <person name="Martchenko M."/>
            <person name="Grindle S."/>
            <person name="Dignard D."/>
            <person name="Hogues H."/>
            <person name="Cuomo C."/>
            <person name="Berriman M."/>
            <person name="Scherer S."/>
            <person name="Magee B.B."/>
            <person name="Whiteway M."/>
            <person name="Chibana H."/>
            <person name="Nantel A."/>
            <person name="Magee P.T."/>
        </authorList>
    </citation>
    <scope>GENOME REANNOTATION</scope>
    <source>
        <strain>SC5314 / ATCC MYA-2876</strain>
    </source>
</reference>
<reference key="3">
    <citation type="journal article" date="2013" name="Genome Biol.">
        <title>Assembly of a phased diploid Candida albicans genome facilitates allele-specific measurements and provides a simple model for repeat and indel structure.</title>
        <authorList>
            <person name="Muzzey D."/>
            <person name="Schwartz K."/>
            <person name="Weissman J.S."/>
            <person name="Sherlock G."/>
        </authorList>
    </citation>
    <scope>NUCLEOTIDE SEQUENCE [LARGE SCALE GENOMIC DNA]</scope>
    <scope>GENOME REANNOTATION</scope>
    <source>
        <strain>SC5314 / ATCC MYA-2876</strain>
    </source>
</reference>
<protein>
    <recommendedName>
        <fullName>EKC/KEOPS complex subunit CGI121</fullName>
    </recommendedName>
</protein>
<evidence type="ECO:0000250" key="1"/>
<evidence type="ECO:0000305" key="2"/>
<feature type="chain" id="PRO_0000279208" description="EKC/KEOPS complex subunit CGI121">
    <location>
        <begin position="1"/>
        <end position="203"/>
    </location>
</feature>